<proteinExistence type="evidence at protein level"/>
<organism>
    <name type="scientific">Hostilia carinata</name>
    <name type="common">Cockroach</name>
    <dbReference type="NCBI Taxonomy" id="645593"/>
    <lineage>
        <taxon>Eukaryota</taxon>
        <taxon>Metazoa</taxon>
        <taxon>Ecdysozoa</taxon>
        <taxon>Arthropoda</taxon>
        <taxon>Hexapoda</taxon>
        <taxon>Insecta</taxon>
        <taxon>Pterygota</taxon>
        <taxon>Neoptera</taxon>
        <taxon>Polyneoptera</taxon>
        <taxon>Dictyoptera</taxon>
        <taxon>Blattodea</taxon>
        <taxon>Blaberoidea</taxon>
        <taxon>Blaberidae</taxon>
        <taxon>Perisphaerinae</taxon>
        <taxon>Hostilia</taxon>
    </lineage>
</organism>
<sequence length="11" mass="1147">GSSGMIPFPRV</sequence>
<reference evidence="4" key="1">
    <citation type="journal article" date="2009" name="BMC Evol. Biol.">
        <title>A proteomic approach for studying insect phylogeny: CAPA peptides of ancient insect taxa (Dictyoptera, Blattoptera) as a test case.</title>
        <authorList>
            <person name="Roth S."/>
            <person name="Fromm B."/>
            <person name="Gaede G."/>
            <person name="Predel R."/>
        </authorList>
    </citation>
    <scope>PROTEIN SEQUENCE</scope>
    <scope>AMIDATION AT VAL-11</scope>
    <source>
        <tissue evidence="2">Abdominal perisympathetic organs</tissue>
    </source>
</reference>
<keyword id="KW-0027">Amidation</keyword>
<keyword id="KW-0903">Direct protein sequencing</keyword>
<keyword id="KW-0527">Neuropeptide</keyword>
<keyword id="KW-0964">Secreted</keyword>
<dbReference type="GO" id="GO:0005576">
    <property type="term" value="C:extracellular region"/>
    <property type="evidence" value="ECO:0007669"/>
    <property type="project" value="UniProtKB-SubCell"/>
</dbReference>
<dbReference type="GO" id="GO:0007218">
    <property type="term" value="P:neuropeptide signaling pathway"/>
    <property type="evidence" value="ECO:0007669"/>
    <property type="project" value="UniProtKB-KW"/>
</dbReference>
<dbReference type="InterPro" id="IPR013231">
    <property type="entry name" value="Periviscerokinin"/>
</dbReference>
<dbReference type="Pfam" id="PF08259">
    <property type="entry name" value="Periviscerokin"/>
    <property type="match status" value="1"/>
</dbReference>
<feature type="peptide" id="PRO_0000378836" description="Periviscerokinin-3" evidence="2">
    <location>
        <begin position="1"/>
        <end position="11"/>
    </location>
</feature>
<feature type="modified residue" description="Valine amide" evidence="2">
    <location>
        <position position="11"/>
    </location>
</feature>
<protein>
    <recommendedName>
        <fullName evidence="3">Periviscerokinin-3</fullName>
        <shortName evidence="3">HosCa-PVK-3</shortName>
    </recommendedName>
</protein>
<name>PVK3_HOSCA</name>
<evidence type="ECO:0000255" key="1"/>
<evidence type="ECO:0000269" key="2">
    <source>
    </source>
</evidence>
<evidence type="ECO:0000303" key="3">
    <source>
    </source>
</evidence>
<evidence type="ECO:0000305" key="4"/>
<accession>P85795</accession>
<comment type="function">
    <text evidence="4">Mediates visceral muscle contractile activity (myotropic activity).</text>
</comment>
<comment type="subcellular location">
    <subcellularLocation>
        <location evidence="4">Secreted</location>
    </subcellularLocation>
</comment>
<comment type="similarity">
    <text evidence="1">Belongs to the periviscerokinin family.</text>
</comment>